<accession>Q0CRF3</accession>
<feature type="chain" id="PRO_0000317852" description="Autophagy protein 5">
    <location>
        <begin position="1"/>
        <end position="315"/>
    </location>
</feature>
<feature type="cross-link" description="Glycyl lysine isopeptide (Lys-Gly) (interchain with G-Cter in atg12)" evidence="1">
    <location>
        <position position="154"/>
    </location>
</feature>
<organism>
    <name type="scientific">Aspergillus terreus (strain NIH 2624 / FGSC A1156)</name>
    <dbReference type="NCBI Taxonomy" id="341663"/>
    <lineage>
        <taxon>Eukaryota</taxon>
        <taxon>Fungi</taxon>
        <taxon>Dikarya</taxon>
        <taxon>Ascomycota</taxon>
        <taxon>Pezizomycotina</taxon>
        <taxon>Eurotiomycetes</taxon>
        <taxon>Eurotiomycetidae</taxon>
        <taxon>Eurotiales</taxon>
        <taxon>Aspergillaceae</taxon>
        <taxon>Aspergillus</taxon>
        <taxon>Aspergillus subgen. Circumdati</taxon>
    </lineage>
</organism>
<proteinExistence type="inferred from homology"/>
<comment type="function">
    <text evidence="1">Involved in cytoplasm to vacuole transport (Cvt) and autophagic vesicle formation. Autophagy is essential for maintenance of amino acid levels and protein synthesis under nitrogen starvation. Required for selective autophagic degradation of the nucleus (nucleophagy). Also required for mitophagy, which eliminates defective or superfluous mitochondria in order to fulfill cellular energy requirements and prevent excess ROS production. Conjugation with atg12, through a ubiquitin-like conjugating system involving atg7 as an E1-like activating enzyme and atg10 as an E2-like conjugating enzyme, is essential for its function. The atg12-atg5 conjugate acts as an E3-like enzyme which is required for lipidation of atg8 and atg8 association to the vesicle membranes (By similarity).</text>
</comment>
<comment type="subunit">
    <text evidence="1">Conjugated with atg12.</text>
</comment>
<comment type="subcellular location">
    <subcellularLocation>
        <location evidence="1">Preautophagosomal structure membrane</location>
        <topology evidence="1">Peripheral membrane protein</topology>
    </subcellularLocation>
</comment>
<comment type="PTM">
    <text evidence="1">Conjugated to atg12; which is essential for autophagy.</text>
</comment>
<comment type="similarity">
    <text evidence="2">Belongs to the ATG5 family.</text>
</comment>
<comment type="sequence caution" evidence="2">
    <conflict type="erroneous gene model prediction">
        <sequence resource="EMBL-CDS" id="EAU35533"/>
    </conflict>
</comment>
<evidence type="ECO:0000250" key="1"/>
<evidence type="ECO:0000305" key="2"/>
<sequence>MEHQATLNDIQKAVWDGRLPLQITLSPSESRSYDKTDPYLISYPRISYLPSLLPRLHAFFSSSLIEPTSKPHDGWFSFEGVPLKWHLPVGLLYDLYAGADPASKGSGPASDDETAEFPLPWRLVVQFSDWPDEELVRLDADGMVMHDAFINSVKEADFMRNGTAKGIMTLSKEDSSGLWKSVQDVDLPSFQRISNILLPPPNQPFRNVPIRFFLPLPPDSGAPSLKVVQSPLPPTLPPSSMAASQAAISRTPQPQTLGTALHALLPNLFPSRRTPVLAKPVLHGAVLPMSAPVEEVVRSSAYGDGWVYIVVRMMG</sequence>
<dbReference type="EMBL" id="CH476598">
    <property type="protein sequence ID" value="EAU35533.1"/>
    <property type="status" value="ALT_SEQ"/>
    <property type="molecule type" value="Genomic_DNA"/>
</dbReference>
<dbReference type="RefSeq" id="XP_001212909.1">
    <property type="nucleotide sequence ID" value="XM_001212909.1"/>
</dbReference>
<dbReference type="SMR" id="Q0CRF3"/>
<dbReference type="STRING" id="341663.Q0CRF3"/>
<dbReference type="GeneID" id="4318659"/>
<dbReference type="OrthoDB" id="272162at2759"/>
<dbReference type="Proteomes" id="UP000007963">
    <property type="component" value="Unassembled WGS sequence"/>
</dbReference>
<dbReference type="GO" id="GO:0034274">
    <property type="term" value="C:Atg12-Atg5-Atg16 complex"/>
    <property type="evidence" value="ECO:0007669"/>
    <property type="project" value="TreeGrafter"/>
</dbReference>
<dbReference type="GO" id="GO:0005776">
    <property type="term" value="C:autophagosome"/>
    <property type="evidence" value="ECO:0007669"/>
    <property type="project" value="TreeGrafter"/>
</dbReference>
<dbReference type="GO" id="GO:0044233">
    <property type="term" value="C:mitochondria-associated endoplasmic reticulum membrane contact site"/>
    <property type="evidence" value="ECO:0007669"/>
    <property type="project" value="TreeGrafter"/>
</dbReference>
<dbReference type="GO" id="GO:0061908">
    <property type="term" value="C:phagophore"/>
    <property type="evidence" value="ECO:0007669"/>
    <property type="project" value="TreeGrafter"/>
</dbReference>
<dbReference type="GO" id="GO:0034045">
    <property type="term" value="C:phagophore assembly site membrane"/>
    <property type="evidence" value="ECO:0007669"/>
    <property type="project" value="UniProtKB-SubCell"/>
</dbReference>
<dbReference type="GO" id="GO:0019776">
    <property type="term" value="F:Atg8-family ligase activity"/>
    <property type="evidence" value="ECO:0007669"/>
    <property type="project" value="TreeGrafter"/>
</dbReference>
<dbReference type="GO" id="GO:0000422">
    <property type="term" value="P:autophagy of mitochondrion"/>
    <property type="evidence" value="ECO:0007669"/>
    <property type="project" value="TreeGrafter"/>
</dbReference>
<dbReference type="GO" id="GO:0006995">
    <property type="term" value="P:cellular response to nitrogen starvation"/>
    <property type="evidence" value="ECO:0007669"/>
    <property type="project" value="TreeGrafter"/>
</dbReference>
<dbReference type="GO" id="GO:0034727">
    <property type="term" value="P:piecemeal microautophagy of the nucleus"/>
    <property type="evidence" value="ECO:0007669"/>
    <property type="project" value="TreeGrafter"/>
</dbReference>
<dbReference type="GO" id="GO:0015031">
    <property type="term" value="P:protein transport"/>
    <property type="evidence" value="ECO:0007669"/>
    <property type="project" value="UniProtKB-KW"/>
</dbReference>
<dbReference type="FunFam" id="1.10.246.190:FF:000004">
    <property type="entry name" value="Autophagy protein 5"/>
    <property type="match status" value="1"/>
</dbReference>
<dbReference type="FunFam" id="3.10.20.620:FF:000004">
    <property type="entry name" value="Autophagy protein 5"/>
    <property type="match status" value="1"/>
</dbReference>
<dbReference type="FunFam" id="3.10.20.90:FF:000290">
    <property type="entry name" value="Autophagy protein 5"/>
    <property type="match status" value="1"/>
</dbReference>
<dbReference type="Gene3D" id="3.10.20.620">
    <property type="match status" value="1"/>
</dbReference>
<dbReference type="Gene3D" id="1.10.246.190">
    <property type="entry name" value="Autophagy protein Apg5, helix rich domain"/>
    <property type="match status" value="1"/>
</dbReference>
<dbReference type="Gene3D" id="3.10.20.90">
    <property type="entry name" value="Phosphatidylinositol 3-kinase Catalytic Subunit, Chain A, domain 1"/>
    <property type="match status" value="1"/>
</dbReference>
<dbReference type="InterPro" id="IPR007239">
    <property type="entry name" value="Atg5"/>
</dbReference>
<dbReference type="InterPro" id="IPR048940">
    <property type="entry name" value="ATG5_HBR"/>
</dbReference>
<dbReference type="InterPro" id="IPR042526">
    <property type="entry name" value="Atg5_HR"/>
</dbReference>
<dbReference type="InterPro" id="IPR048939">
    <property type="entry name" value="ATG5_UblA"/>
</dbReference>
<dbReference type="InterPro" id="IPR042527">
    <property type="entry name" value="Atg5_UblA_dom_sf"/>
</dbReference>
<dbReference type="InterPro" id="IPR048318">
    <property type="entry name" value="ATG5_UblB"/>
</dbReference>
<dbReference type="PANTHER" id="PTHR13040">
    <property type="entry name" value="AUTOPHAGY PROTEIN 5"/>
    <property type="match status" value="1"/>
</dbReference>
<dbReference type="PANTHER" id="PTHR13040:SF2">
    <property type="entry name" value="AUTOPHAGY PROTEIN 5"/>
    <property type="match status" value="1"/>
</dbReference>
<dbReference type="Pfam" id="PF20637">
    <property type="entry name" value="ATG5_HBR"/>
    <property type="match status" value="1"/>
</dbReference>
<dbReference type="Pfam" id="PF20638">
    <property type="entry name" value="ATG5_UblA"/>
    <property type="match status" value="1"/>
</dbReference>
<dbReference type="Pfam" id="PF04106">
    <property type="entry name" value="ATG5_UblB"/>
    <property type="match status" value="1"/>
</dbReference>
<reference key="1">
    <citation type="submission" date="2005-09" db="EMBL/GenBank/DDBJ databases">
        <title>Annotation of the Aspergillus terreus NIH2624 genome.</title>
        <authorList>
            <person name="Birren B.W."/>
            <person name="Lander E.S."/>
            <person name="Galagan J.E."/>
            <person name="Nusbaum C."/>
            <person name="Devon K."/>
            <person name="Henn M."/>
            <person name="Ma L.-J."/>
            <person name="Jaffe D.B."/>
            <person name="Butler J."/>
            <person name="Alvarez P."/>
            <person name="Gnerre S."/>
            <person name="Grabherr M."/>
            <person name="Kleber M."/>
            <person name="Mauceli E.W."/>
            <person name="Brockman W."/>
            <person name="Rounsley S."/>
            <person name="Young S.K."/>
            <person name="LaButti K."/>
            <person name="Pushparaj V."/>
            <person name="DeCaprio D."/>
            <person name="Crawford M."/>
            <person name="Koehrsen M."/>
            <person name="Engels R."/>
            <person name="Montgomery P."/>
            <person name="Pearson M."/>
            <person name="Howarth C."/>
            <person name="Larson L."/>
            <person name="Luoma S."/>
            <person name="White J."/>
            <person name="Alvarado L."/>
            <person name="Kodira C.D."/>
            <person name="Zeng Q."/>
            <person name="Oleary S."/>
            <person name="Yandava C."/>
            <person name="Denning D.W."/>
            <person name="Nierman W.C."/>
            <person name="Milne T."/>
            <person name="Madden K."/>
        </authorList>
    </citation>
    <scope>NUCLEOTIDE SEQUENCE [LARGE SCALE GENOMIC DNA]</scope>
    <source>
        <strain>NIH 2624 / FGSC A1156</strain>
    </source>
</reference>
<protein>
    <recommendedName>
        <fullName>Autophagy protein 5</fullName>
    </recommendedName>
</protein>
<name>ATG5_ASPTN</name>
<gene>
    <name type="primary">atg5</name>
    <name type="ORF">ATEG_03731</name>
</gene>
<keyword id="KW-0072">Autophagy</keyword>
<keyword id="KW-1017">Isopeptide bond</keyword>
<keyword id="KW-0472">Membrane</keyword>
<keyword id="KW-0653">Protein transport</keyword>
<keyword id="KW-1185">Reference proteome</keyword>
<keyword id="KW-0813">Transport</keyword>
<keyword id="KW-0832">Ubl conjugation</keyword>